<comment type="function">
    <text evidence="2">Hydrolyzes inulin-type beta-(2,1)-fructans. May play a role as a beta-(2,1)-trimmer during graminan biosynthesis (By similarity).</text>
</comment>
<comment type="catalytic activity">
    <reaction evidence="2">
        <text>Hydrolysis of terminal, non-reducing (2-&gt;1)-linked beta-D-fructofuranose residues in fructans.</text>
        <dbReference type="EC" id="3.2.1.153"/>
    </reaction>
</comment>
<comment type="activity regulation">
    <text evidence="2">Inhibited by sucrose.</text>
</comment>
<comment type="similarity">
    <text evidence="3">Belongs to the glycosyl hydrolase 32 family.</text>
</comment>
<dbReference type="EC" id="3.2.1.153"/>
<dbReference type="EMBL" id="FJ184994">
    <property type="protein sequence ID" value="ACI16120.1"/>
    <property type="molecule type" value="Genomic_DNA"/>
</dbReference>
<dbReference type="SMR" id="B6DZD2"/>
<dbReference type="CAZy" id="GH32">
    <property type="family name" value="Glycoside Hydrolase Family 32"/>
</dbReference>
<dbReference type="GlyCosmos" id="B6DZD2">
    <property type="glycosylation" value="4 sites, No reported glycans"/>
</dbReference>
<dbReference type="GO" id="GO:0033948">
    <property type="term" value="F:fructan beta-(2,1)-fructosidase activity"/>
    <property type="evidence" value="ECO:0007669"/>
    <property type="project" value="UniProtKB-EC"/>
</dbReference>
<dbReference type="GO" id="GO:0005975">
    <property type="term" value="P:carbohydrate metabolic process"/>
    <property type="evidence" value="ECO:0007669"/>
    <property type="project" value="InterPro"/>
</dbReference>
<dbReference type="CDD" id="cd18624">
    <property type="entry name" value="GH32_Fruct1-like"/>
    <property type="match status" value="1"/>
</dbReference>
<dbReference type="FunFam" id="2.115.10.20:FF:000001">
    <property type="entry name" value="Beta-fructofuranosidase, insoluble isoenzyme CWINV1"/>
    <property type="match status" value="1"/>
</dbReference>
<dbReference type="FunFam" id="2.60.120.560:FF:000002">
    <property type="entry name" value="Beta-fructofuranosidase, insoluble isoenzyme CWINV1"/>
    <property type="match status" value="1"/>
</dbReference>
<dbReference type="Gene3D" id="2.60.120.560">
    <property type="entry name" value="Exo-inulinase, domain 1"/>
    <property type="match status" value="1"/>
</dbReference>
<dbReference type="Gene3D" id="2.115.10.20">
    <property type="entry name" value="Glycosyl hydrolase domain, family 43"/>
    <property type="match status" value="1"/>
</dbReference>
<dbReference type="InterPro" id="IPR013320">
    <property type="entry name" value="ConA-like_dom_sf"/>
</dbReference>
<dbReference type="InterPro" id="IPR050551">
    <property type="entry name" value="Fructan_Metab_Enzymes"/>
</dbReference>
<dbReference type="InterPro" id="IPR001362">
    <property type="entry name" value="Glyco_hydro_32"/>
</dbReference>
<dbReference type="InterPro" id="IPR013189">
    <property type="entry name" value="Glyco_hydro_32_C"/>
</dbReference>
<dbReference type="InterPro" id="IPR013148">
    <property type="entry name" value="Glyco_hydro_32_N"/>
</dbReference>
<dbReference type="InterPro" id="IPR023296">
    <property type="entry name" value="Glyco_hydro_beta-prop_sf"/>
</dbReference>
<dbReference type="PANTHER" id="PTHR31953">
    <property type="entry name" value="BETA-FRUCTOFURANOSIDASE, INSOLUBLE ISOENZYME CWINV1-RELATED"/>
    <property type="match status" value="1"/>
</dbReference>
<dbReference type="Pfam" id="PF08244">
    <property type="entry name" value="Glyco_hydro_32C"/>
    <property type="match status" value="1"/>
</dbReference>
<dbReference type="Pfam" id="PF00251">
    <property type="entry name" value="Glyco_hydro_32N"/>
    <property type="match status" value="1"/>
</dbReference>
<dbReference type="SMART" id="SM00640">
    <property type="entry name" value="Glyco_32"/>
    <property type="match status" value="1"/>
</dbReference>
<dbReference type="SUPFAM" id="SSF75005">
    <property type="entry name" value="Arabinanase/levansucrase/invertase"/>
    <property type="match status" value="1"/>
</dbReference>
<dbReference type="SUPFAM" id="SSF49899">
    <property type="entry name" value="Concanavalin A-like lectins/glucanases"/>
    <property type="match status" value="1"/>
</dbReference>
<feature type="signal peptide" evidence="3">
    <location>
        <begin position="1"/>
        <end position="20"/>
    </location>
</feature>
<feature type="chain" id="PRO_0000395555" description="Fructan 1-exohydrolase" evidence="3">
    <location>
        <begin position="21"/>
        <end position="596"/>
    </location>
</feature>
<feature type="active site" evidence="1">
    <location>
        <position position="75"/>
    </location>
</feature>
<feature type="glycosylation site" description="N-linked (GlcNAc...) asparagine" evidence="3">
    <location>
        <position position="168"/>
    </location>
</feature>
<feature type="glycosylation site" description="N-linked (GlcNAc...) asparagine" evidence="3">
    <location>
        <position position="236"/>
    </location>
</feature>
<feature type="glycosylation site" description="N-linked (GlcNAc...) asparagine" evidence="3">
    <location>
        <position position="248"/>
    </location>
</feature>
<feature type="glycosylation site" description="N-linked (GlcNAc...) asparagine" evidence="3">
    <location>
        <position position="567"/>
    </location>
</feature>
<feature type="disulfide bond" evidence="1">
    <location>
        <begin position="446"/>
        <end position="492"/>
    </location>
</feature>
<reference evidence="4" key="1">
    <citation type="journal article" date="2008" name="Mol. Breed.">
        <title>The genome structure of the 1-FEH genes in wheat (Triticum aestivum L.): new markers to track stem carbohydrates and grain filling QTLs in breeding.</title>
        <authorList>
            <person name="Zhang J."/>
            <person name="Huang S."/>
            <person name="Fosu-Nyarko J."/>
            <person name="Dell B."/>
            <person name="McNeil M."/>
            <person name="Waters I."/>
            <person name="Moolhuijzen P."/>
            <person name="Conocono E."/>
            <person name="Appels R."/>
        </authorList>
        <dbReference type="AGRICOLA" id="IND44093987"/>
    </citation>
    <scope>NUCLEOTIDE SEQUENCE [GENOMIC DNA]</scope>
</reference>
<evidence type="ECO:0000250" key="1">
    <source>
        <dbReference type="UniProtKB" id="Q43866"/>
    </source>
</evidence>
<evidence type="ECO:0000250" key="2">
    <source>
        <dbReference type="UniProtKB" id="Q84PN8"/>
    </source>
</evidence>
<evidence type="ECO:0000255" key="3"/>
<evidence type="ECO:0000312" key="4">
    <source>
        <dbReference type="EMBL" id="ACI16120.1"/>
    </source>
</evidence>
<organism>
    <name type="scientific">Aegilops tauschii</name>
    <name type="common">Tausch's goatgrass</name>
    <name type="synonym">Aegilops squarrosa</name>
    <dbReference type="NCBI Taxonomy" id="37682"/>
    <lineage>
        <taxon>Eukaryota</taxon>
        <taxon>Viridiplantae</taxon>
        <taxon>Streptophyta</taxon>
        <taxon>Embryophyta</taxon>
        <taxon>Tracheophyta</taxon>
        <taxon>Spermatophyta</taxon>
        <taxon>Magnoliopsida</taxon>
        <taxon>Liliopsida</taxon>
        <taxon>Poales</taxon>
        <taxon>Poaceae</taxon>
        <taxon>BOP clade</taxon>
        <taxon>Pooideae</taxon>
        <taxon>Triticodae</taxon>
        <taxon>Triticeae</taxon>
        <taxon>Triticinae</taxon>
        <taxon>Aegilops</taxon>
    </lineage>
</organism>
<gene>
    <name evidence="2" type="primary">1-FEH</name>
</gene>
<sequence length="596" mass="66505">MAQAWAFLLPVLVLGSYVTSLFFPSYISNPLCGGDGGRSLFLCAQAPKDQDPSPAVSTMYKTAFHFQPAKNWMNDPSGPMYFNGIYHEFYQYNLNGPIFGDIVWGHSVSTDLVNWIGLEPALVRDTPSDIDGCWTGSVTILPGGKPIIIYTGGDIDQHQAQNIAFPKNRSDPYLREWIKAPNNPVLRPDGPGMNSIEFRDPTTGWIGPDGLWRMAVGGELNGYSAALLYKSEDFLNWTKVDHPLYSHNGSNMWECPDFFAVLPGNNAGLDLSAAIPQGAKHALKMSVDSVDKYMIGVYDLQRDAFVPDNVVDDRRLWLRIDYGTFYASKSFFDSNKNRRIIWGWSRETDSPSDDLEKGWAGLHTIPRTIWLAGDGKQLLQWPVEEIESLRTNEISHQGIELNKGDLFEIKEVDAFQADVEIVFELASIDDADSFDPSWLLDPEKHCGEAGASVPGGIGPFGLVILASDNMDEHTEVYFRVYKSQEKYMVLMCSDLRRSSLRPDLEKPAYGGFFEFDLEKERKISLRTLIDRSAVESFGGGGRVCITSRVYPAVLADVGRAHIYAFNNGSATVRVPQLSAWTMRKAQVNVEKGWSAI</sequence>
<keyword id="KW-1015">Disulfide bond</keyword>
<keyword id="KW-0325">Glycoprotein</keyword>
<keyword id="KW-0326">Glycosidase</keyword>
<keyword id="KW-0378">Hydrolase</keyword>
<keyword id="KW-0732">Signal</keyword>
<accession>B6DZD2</accession>
<name>1FEH_AEGTA</name>
<protein>
    <recommendedName>
        <fullName>Fructan 1-exohydrolase</fullName>
        <ecNumber>3.2.1.153</ecNumber>
    </recommendedName>
</protein>
<proteinExistence type="inferred from homology"/>